<reference key="1">
    <citation type="journal article" date="2000" name="Nature">
        <title>Complete genome sequence of Pseudomonas aeruginosa PAO1, an opportunistic pathogen.</title>
        <authorList>
            <person name="Stover C.K."/>
            <person name="Pham X.-Q.T."/>
            <person name="Erwin A.L."/>
            <person name="Mizoguchi S.D."/>
            <person name="Warrener P."/>
            <person name="Hickey M.J."/>
            <person name="Brinkman F.S.L."/>
            <person name="Hufnagle W.O."/>
            <person name="Kowalik D.J."/>
            <person name="Lagrou M."/>
            <person name="Garber R.L."/>
            <person name="Goltry L."/>
            <person name="Tolentino E."/>
            <person name="Westbrock-Wadman S."/>
            <person name="Yuan Y."/>
            <person name="Brody L.L."/>
            <person name="Coulter S.N."/>
            <person name="Folger K.R."/>
            <person name="Kas A."/>
            <person name="Larbig K."/>
            <person name="Lim R.M."/>
            <person name="Smith K.A."/>
            <person name="Spencer D.H."/>
            <person name="Wong G.K.-S."/>
            <person name="Wu Z."/>
            <person name="Paulsen I.T."/>
            <person name="Reizer J."/>
            <person name="Saier M.H. Jr."/>
            <person name="Hancock R.E.W."/>
            <person name="Lory S."/>
            <person name="Olson M.V."/>
        </authorList>
    </citation>
    <scope>NUCLEOTIDE SEQUENCE [LARGE SCALE GENOMIC DNA]</scope>
    <source>
        <strain>ATCC 15692 / DSM 22644 / CIP 104116 / JCM 14847 / LMG 12228 / 1C / PRS 101 / PAO1</strain>
    </source>
</reference>
<dbReference type="EC" id="1.8.1.-"/>
<dbReference type="EMBL" id="AE004091">
    <property type="protein sequence ID" value="AAG03530.1"/>
    <property type="molecule type" value="Genomic_DNA"/>
</dbReference>
<dbReference type="PIR" id="D83627">
    <property type="entry name" value="D83627"/>
</dbReference>
<dbReference type="RefSeq" id="NP_248830.1">
    <property type="nucleotide sequence ID" value="NC_002516.2"/>
</dbReference>
<dbReference type="RefSeq" id="WP_003111221.1">
    <property type="nucleotide sequence ID" value="NZ_QZGE01000015.1"/>
</dbReference>
<dbReference type="SMR" id="Q9I6Z2"/>
<dbReference type="FunCoup" id="Q9I6Z2">
    <property type="interactions" value="102"/>
</dbReference>
<dbReference type="STRING" id="208964.PA0140"/>
<dbReference type="PaxDb" id="208964-PA0140"/>
<dbReference type="GeneID" id="879326"/>
<dbReference type="KEGG" id="pae:PA0140"/>
<dbReference type="PATRIC" id="fig|208964.12.peg.146"/>
<dbReference type="PseudoCAP" id="PA0140"/>
<dbReference type="HOGENOM" id="CLU_031864_4_0_6"/>
<dbReference type="InParanoid" id="Q9I6Z2"/>
<dbReference type="OrthoDB" id="9806179at2"/>
<dbReference type="PhylomeDB" id="Q9I6Z2"/>
<dbReference type="BioCyc" id="PAER208964:G1FZ6-142-MONOMER"/>
<dbReference type="BRENDA" id="1.11.1.26">
    <property type="organism ID" value="5087"/>
</dbReference>
<dbReference type="Proteomes" id="UP000002438">
    <property type="component" value="Chromosome"/>
</dbReference>
<dbReference type="GO" id="GO:0005829">
    <property type="term" value="C:cytosol"/>
    <property type="evidence" value="ECO:0000318"/>
    <property type="project" value="GO_Central"/>
</dbReference>
<dbReference type="GO" id="GO:0050660">
    <property type="term" value="F:flavin adenine dinucleotide binding"/>
    <property type="evidence" value="ECO:0007669"/>
    <property type="project" value="InterPro"/>
</dbReference>
<dbReference type="GO" id="GO:0051287">
    <property type="term" value="F:NAD binding"/>
    <property type="evidence" value="ECO:0007669"/>
    <property type="project" value="InterPro"/>
</dbReference>
<dbReference type="GO" id="GO:0102039">
    <property type="term" value="F:NADH-dependent peroxiredoxin activity"/>
    <property type="evidence" value="ECO:0007669"/>
    <property type="project" value="InterPro"/>
</dbReference>
<dbReference type="GO" id="GO:0004791">
    <property type="term" value="F:thioredoxin-disulfide reductase (NADPH) activity"/>
    <property type="evidence" value="ECO:0000318"/>
    <property type="project" value="GO_Central"/>
</dbReference>
<dbReference type="GO" id="GO:0045454">
    <property type="term" value="P:cell redox homeostasis"/>
    <property type="evidence" value="ECO:0000318"/>
    <property type="project" value="GO_Central"/>
</dbReference>
<dbReference type="GO" id="GO:0000302">
    <property type="term" value="P:response to reactive oxygen species"/>
    <property type="evidence" value="ECO:0007669"/>
    <property type="project" value="InterPro"/>
</dbReference>
<dbReference type="CDD" id="cd03026">
    <property type="entry name" value="AhpF_NTD_C"/>
    <property type="match status" value="1"/>
</dbReference>
<dbReference type="CDD" id="cd02974">
    <property type="entry name" value="AhpF_NTD_N"/>
    <property type="match status" value="1"/>
</dbReference>
<dbReference type="FunFam" id="3.40.30.80:FF:000001">
    <property type="entry name" value="Alkyl hydroperoxide reductase subunit F"/>
    <property type="match status" value="1"/>
</dbReference>
<dbReference type="FunFam" id="3.50.50.60:FF:000007">
    <property type="entry name" value="Alkyl hydroperoxide reductase, F subunit"/>
    <property type="match status" value="1"/>
</dbReference>
<dbReference type="Gene3D" id="3.40.30.80">
    <property type="match status" value="1"/>
</dbReference>
<dbReference type="Gene3D" id="3.50.50.60">
    <property type="entry name" value="FAD/NAD(P)-binding domain"/>
    <property type="match status" value="2"/>
</dbReference>
<dbReference type="InterPro" id="IPR044141">
    <property type="entry name" value="AhpF_NTD_C"/>
</dbReference>
<dbReference type="InterPro" id="IPR044142">
    <property type="entry name" value="AhpF_NTD_N"/>
</dbReference>
<dbReference type="InterPro" id="IPR012081">
    <property type="entry name" value="Alkyl_hydroperoxide_Rdtase_suF"/>
</dbReference>
<dbReference type="InterPro" id="IPR036188">
    <property type="entry name" value="FAD/NAD-bd_sf"/>
</dbReference>
<dbReference type="InterPro" id="IPR023753">
    <property type="entry name" value="FAD/NAD-binding_dom"/>
</dbReference>
<dbReference type="InterPro" id="IPR050097">
    <property type="entry name" value="Ferredoxin-NADP_redctase_2"/>
</dbReference>
<dbReference type="InterPro" id="IPR008255">
    <property type="entry name" value="Pyr_nucl-diS_OxRdtase_2_AS"/>
</dbReference>
<dbReference type="InterPro" id="IPR012336">
    <property type="entry name" value="Thioredoxin-like_fold"/>
</dbReference>
<dbReference type="InterPro" id="IPR036249">
    <property type="entry name" value="Thioredoxin-like_sf"/>
</dbReference>
<dbReference type="NCBIfam" id="TIGR03140">
    <property type="entry name" value="AhpF"/>
    <property type="match status" value="1"/>
</dbReference>
<dbReference type="PANTHER" id="PTHR48105">
    <property type="entry name" value="THIOREDOXIN REDUCTASE 1-RELATED-RELATED"/>
    <property type="match status" value="1"/>
</dbReference>
<dbReference type="Pfam" id="PF07992">
    <property type="entry name" value="Pyr_redox_2"/>
    <property type="match status" value="1"/>
</dbReference>
<dbReference type="Pfam" id="PF13192">
    <property type="entry name" value="Thioredoxin_3"/>
    <property type="match status" value="1"/>
</dbReference>
<dbReference type="PIRSF" id="PIRSF000238">
    <property type="entry name" value="AhpF"/>
    <property type="match status" value="1"/>
</dbReference>
<dbReference type="PRINTS" id="PR00368">
    <property type="entry name" value="FADPNR"/>
</dbReference>
<dbReference type="PRINTS" id="PR00469">
    <property type="entry name" value="PNDRDTASEII"/>
</dbReference>
<dbReference type="SUPFAM" id="SSF51905">
    <property type="entry name" value="FAD/NAD(P)-binding domain"/>
    <property type="match status" value="1"/>
</dbReference>
<dbReference type="SUPFAM" id="SSF52833">
    <property type="entry name" value="Thioredoxin-like"/>
    <property type="match status" value="2"/>
</dbReference>
<dbReference type="PROSITE" id="PS51354">
    <property type="entry name" value="GLUTAREDOXIN_2"/>
    <property type="match status" value="1"/>
</dbReference>
<dbReference type="PROSITE" id="PS00573">
    <property type="entry name" value="PYRIDINE_REDOX_2"/>
    <property type="match status" value="1"/>
</dbReference>
<accession>Q9I6Z2</accession>
<sequence length="521" mass="55836">MLDANLKTQLKAYLEKVSQPFEIVASLDDSDKSRELLGLLQDIVGLTDKITLKTDGSDARKPSFSLNRPGADIGLRFAGIPMGHEFTSLVLALLQVGGHPSKLDADVIEQVKGIEGTFEFETYFSLSCQNCPDVVQALNLMAVLNPNIRHVAIDGALFQDEVEARQIMSVPSIYLNGEVFGQGRMGVEEILAKIDTGAAARDAEKLTARDAFDVLVVGGGPAGAAAAIYAARKGIRTGVAAERFGGQVLDTMAIENFISVQETEGPKLARALEEHVRHYEVDIMNLQRASKLVPAKNAGELHEVRFESGGSLKAKTLILATGARWREMGVPGEQEYKAKGVCFCPHCDGPLFKGKRVAVIGGGNSGVEAAIDLAGIVAHVTLLEFDSKLRADAVLQRKLYSLPNVEVITSALTSEVKGDGQKVTGLVYKDRNSEEFKSIELEGIFVQIGLLPNTEWLKGSVELSPRGEIIVDARGETSLPGIFAAGDVTTVPYKQIVIAVGEGAKASLSAFDHLIRTSAPE</sequence>
<name>AHPF_PSEAE</name>
<proteinExistence type="inferred from homology"/>
<gene>
    <name type="primary">ahpF</name>
    <name type="ordered locus">PA0140</name>
</gene>
<organism>
    <name type="scientific">Pseudomonas aeruginosa (strain ATCC 15692 / DSM 22644 / CIP 104116 / JCM 14847 / LMG 12228 / 1C / PRS 101 / PAO1)</name>
    <dbReference type="NCBI Taxonomy" id="208964"/>
    <lineage>
        <taxon>Bacteria</taxon>
        <taxon>Pseudomonadati</taxon>
        <taxon>Pseudomonadota</taxon>
        <taxon>Gammaproteobacteria</taxon>
        <taxon>Pseudomonadales</taxon>
        <taxon>Pseudomonadaceae</taxon>
        <taxon>Pseudomonas</taxon>
    </lineage>
</organism>
<feature type="chain" id="PRO_0000287807" description="Alkyl hydroperoxide reductase subunit F">
    <location>
        <begin position="1"/>
        <end position="521"/>
    </location>
</feature>
<feature type="binding site" evidence="1">
    <location>
        <begin position="213"/>
        <end position="228"/>
    </location>
    <ligand>
        <name>FAD</name>
        <dbReference type="ChEBI" id="CHEBI:57692"/>
    </ligand>
</feature>
<feature type="binding site" evidence="1">
    <location>
        <begin position="356"/>
        <end position="370"/>
    </location>
    <ligand>
        <name>NAD(+)</name>
        <dbReference type="ChEBI" id="CHEBI:57540"/>
    </ligand>
</feature>
<feature type="binding site" evidence="1">
    <location>
        <begin position="477"/>
        <end position="487"/>
    </location>
    <ligand>
        <name>FAD</name>
        <dbReference type="ChEBI" id="CHEBI:57692"/>
    </ligand>
</feature>
<feature type="disulfide bond" description="Redox-active" evidence="1">
    <location>
        <begin position="344"/>
        <end position="347"/>
    </location>
</feature>
<comment type="function">
    <text evidence="1">Serves to protect the cell against DNA damage by alkyl hydroperoxides. It can use either NADH or NADPH as electron donor for direct reduction of redox dyes or of alkyl hydroperoxides when combined with the AhpC protein (By similarity).</text>
</comment>
<comment type="cofactor">
    <cofactor evidence="1">
        <name>FAD</name>
        <dbReference type="ChEBI" id="CHEBI:57692"/>
    </cofactor>
    <text evidence="1">Binds 1 FAD per subunit.</text>
</comment>
<comment type="subunit">
    <text evidence="1">Homodimer.</text>
</comment>
<comment type="miscellaneous">
    <text evidence="1">The active site is a redox-active disulfide bond.</text>
</comment>
<comment type="similarity">
    <text evidence="2">Belongs to the class-II pyridine nucleotide-disulfide oxidoreductase family.</text>
</comment>
<keyword id="KW-1015">Disulfide bond</keyword>
<keyword id="KW-0274">FAD</keyword>
<keyword id="KW-0285">Flavoprotein</keyword>
<keyword id="KW-0520">NAD</keyword>
<keyword id="KW-0521">NADP</keyword>
<keyword id="KW-0560">Oxidoreductase</keyword>
<keyword id="KW-0676">Redox-active center</keyword>
<keyword id="KW-1185">Reference proteome</keyword>
<protein>
    <recommendedName>
        <fullName>Alkyl hydroperoxide reductase subunit F</fullName>
        <ecNumber>1.8.1.-</ecNumber>
    </recommendedName>
</protein>
<evidence type="ECO:0000250" key="1"/>
<evidence type="ECO:0000305" key="2"/>